<reference key="1">
    <citation type="journal article" date="2009" name="Environ. Microbiol.">
        <title>The genome of Polaromonas naphthalenivorans strain CJ2, isolated from coal tar-contaminated sediment, reveals physiological and metabolic versatility and evolution through extensive horizontal gene transfer.</title>
        <authorList>
            <person name="Yagi J.M."/>
            <person name="Sims D."/>
            <person name="Brettin T."/>
            <person name="Bruce D."/>
            <person name="Madsen E.L."/>
        </authorList>
    </citation>
    <scope>NUCLEOTIDE SEQUENCE [LARGE SCALE GENOMIC DNA]</scope>
    <source>
        <strain>CJ2</strain>
    </source>
</reference>
<accession>A1VMK3</accession>
<keyword id="KW-0408">Iron</keyword>
<keyword id="KW-0411">Iron-sulfur</keyword>
<keyword id="KW-0479">Metal-binding</keyword>
<keyword id="KW-1185">Reference proteome</keyword>
<comment type="function">
    <text evidence="1">Required for insertion of 4Fe-4S clusters.</text>
</comment>
<comment type="cofactor">
    <cofactor evidence="1">
        <name>iron-sulfur cluster</name>
        <dbReference type="ChEBI" id="CHEBI:30408"/>
    </cofactor>
    <text evidence="1">Binds 1 iron-sulfur cluster per subunit.</text>
</comment>
<comment type="subunit">
    <text evidence="1">Homodimer.</text>
</comment>
<comment type="similarity">
    <text evidence="1">Belongs to the HesB/IscA family.</text>
</comment>
<protein>
    <recommendedName>
        <fullName evidence="1">Putative iron-sulfur cluster insertion protein ErpA 2</fullName>
    </recommendedName>
</protein>
<gene>
    <name evidence="1" type="primary">erpA2</name>
    <name type="ordered locus">Pnap_1567</name>
</gene>
<feature type="chain" id="PRO_0000311518" description="Putative iron-sulfur cluster insertion protein ErpA 2">
    <location>
        <begin position="1"/>
        <end position="125"/>
    </location>
</feature>
<feature type="binding site" evidence="1">
    <location>
        <position position="53"/>
    </location>
    <ligand>
        <name>iron-sulfur cluster</name>
        <dbReference type="ChEBI" id="CHEBI:30408"/>
    </ligand>
</feature>
<feature type="binding site" evidence="1">
    <location>
        <position position="117"/>
    </location>
    <ligand>
        <name>iron-sulfur cluster</name>
        <dbReference type="ChEBI" id="CHEBI:30408"/>
    </ligand>
</feature>
<feature type="binding site" evidence="1">
    <location>
        <position position="119"/>
    </location>
    <ligand>
        <name>iron-sulfur cluster</name>
        <dbReference type="ChEBI" id="CHEBI:30408"/>
    </ligand>
</feature>
<sequence>MEAALNIASPSLPGVMPGQLEFTTSAAAKVSELIVEEGNPNLKLRLYVTGGGCSGFSYGFAFDDQTAEDDTLIVTEGVALVVDAMSLQYVLGARVDFEDGLEGSRFVIHNPNAQSTCGCGSSFSV</sequence>
<evidence type="ECO:0000255" key="1">
    <source>
        <dbReference type="HAMAP-Rule" id="MF_01380"/>
    </source>
</evidence>
<proteinExistence type="inferred from homology"/>
<dbReference type="EMBL" id="CP000529">
    <property type="protein sequence ID" value="ABM36881.1"/>
    <property type="molecule type" value="Genomic_DNA"/>
</dbReference>
<dbReference type="SMR" id="A1VMK3"/>
<dbReference type="STRING" id="365044.Pnap_1567"/>
<dbReference type="KEGG" id="pna:Pnap_1567"/>
<dbReference type="eggNOG" id="COG0316">
    <property type="taxonomic scope" value="Bacteria"/>
</dbReference>
<dbReference type="HOGENOM" id="CLU_069054_5_3_4"/>
<dbReference type="OrthoDB" id="9801228at2"/>
<dbReference type="Proteomes" id="UP000000644">
    <property type="component" value="Chromosome"/>
</dbReference>
<dbReference type="GO" id="GO:0005829">
    <property type="term" value="C:cytosol"/>
    <property type="evidence" value="ECO:0007669"/>
    <property type="project" value="TreeGrafter"/>
</dbReference>
<dbReference type="GO" id="GO:0051537">
    <property type="term" value="F:2 iron, 2 sulfur cluster binding"/>
    <property type="evidence" value="ECO:0007669"/>
    <property type="project" value="UniProtKB-ARBA"/>
</dbReference>
<dbReference type="GO" id="GO:0051539">
    <property type="term" value="F:4 iron, 4 sulfur cluster binding"/>
    <property type="evidence" value="ECO:0007669"/>
    <property type="project" value="TreeGrafter"/>
</dbReference>
<dbReference type="GO" id="GO:0005506">
    <property type="term" value="F:iron ion binding"/>
    <property type="evidence" value="ECO:0007669"/>
    <property type="project" value="UniProtKB-UniRule"/>
</dbReference>
<dbReference type="GO" id="GO:0016226">
    <property type="term" value="P:iron-sulfur cluster assembly"/>
    <property type="evidence" value="ECO:0007669"/>
    <property type="project" value="UniProtKB-UniRule"/>
</dbReference>
<dbReference type="FunFam" id="2.60.300.12:FF:000002">
    <property type="entry name" value="Iron-sulfur cluster insertion protein ErpA"/>
    <property type="match status" value="1"/>
</dbReference>
<dbReference type="Gene3D" id="2.60.300.12">
    <property type="entry name" value="HesB-like domain"/>
    <property type="match status" value="1"/>
</dbReference>
<dbReference type="HAMAP" id="MF_01380">
    <property type="entry name" value="Fe_S_insert_ErpA"/>
    <property type="match status" value="1"/>
</dbReference>
<dbReference type="InterPro" id="IPR000361">
    <property type="entry name" value="FeS_biogenesis"/>
</dbReference>
<dbReference type="InterPro" id="IPR016092">
    <property type="entry name" value="FeS_cluster_insertion"/>
</dbReference>
<dbReference type="InterPro" id="IPR017870">
    <property type="entry name" value="FeS_cluster_insertion_CS"/>
</dbReference>
<dbReference type="InterPro" id="IPR023063">
    <property type="entry name" value="FeS_cluster_insertion_RrpA"/>
</dbReference>
<dbReference type="InterPro" id="IPR035903">
    <property type="entry name" value="HesB-like_dom_sf"/>
</dbReference>
<dbReference type="NCBIfam" id="TIGR00049">
    <property type="entry name" value="iron-sulfur cluster assembly accessory protein"/>
    <property type="match status" value="1"/>
</dbReference>
<dbReference type="NCBIfam" id="NF010147">
    <property type="entry name" value="PRK13623.1"/>
    <property type="match status" value="1"/>
</dbReference>
<dbReference type="PANTHER" id="PTHR43011">
    <property type="entry name" value="IRON-SULFUR CLUSTER ASSEMBLY 2 HOMOLOG, MITOCHONDRIAL"/>
    <property type="match status" value="1"/>
</dbReference>
<dbReference type="PANTHER" id="PTHR43011:SF1">
    <property type="entry name" value="IRON-SULFUR CLUSTER ASSEMBLY 2 HOMOLOG, MITOCHONDRIAL"/>
    <property type="match status" value="1"/>
</dbReference>
<dbReference type="Pfam" id="PF01521">
    <property type="entry name" value="Fe-S_biosyn"/>
    <property type="match status" value="1"/>
</dbReference>
<dbReference type="SUPFAM" id="SSF89360">
    <property type="entry name" value="HesB-like domain"/>
    <property type="match status" value="1"/>
</dbReference>
<dbReference type="PROSITE" id="PS01152">
    <property type="entry name" value="HESB"/>
    <property type="match status" value="1"/>
</dbReference>
<name>ERPA2_POLNA</name>
<organism>
    <name type="scientific">Polaromonas naphthalenivorans (strain CJ2)</name>
    <dbReference type="NCBI Taxonomy" id="365044"/>
    <lineage>
        <taxon>Bacteria</taxon>
        <taxon>Pseudomonadati</taxon>
        <taxon>Pseudomonadota</taxon>
        <taxon>Betaproteobacteria</taxon>
        <taxon>Burkholderiales</taxon>
        <taxon>Comamonadaceae</taxon>
        <taxon>Polaromonas</taxon>
    </lineage>
</organism>